<comment type="function">
    <text evidence="1">Cell wall formation.</text>
</comment>
<comment type="catalytic activity">
    <reaction evidence="1">
        <text>UDP-N-acetyl-alpha-D-muramate + NADP(+) = UDP-N-acetyl-3-O-(1-carboxyvinyl)-alpha-D-glucosamine + NADPH + H(+)</text>
        <dbReference type="Rhea" id="RHEA:12248"/>
        <dbReference type="ChEBI" id="CHEBI:15378"/>
        <dbReference type="ChEBI" id="CHEBI:57783"/>
        <dbReference type="ChEBI" id="CHEBI:58349"/>
        <dbReference type="ChEBI" id="CHEBI:68483"/>
        <dbReference type="ChEBI" id="CHEBI:70757"/>
        <dbReference type="EC" id="1.3.1.98"/>
    </reaction>
</comment>
<comment type="cofactor">
    <cofactor evidence="1">
        <name>FAD</name>
        <dbReference type="ChEBI" id="CHEBI:57692"/>
    </cofactor>
</comment>
<comment type="pathway">
    <text evidence="1">Cell wall biogenesis; peptidoglycan biosynthesis.</text>
</comment>
<comment type="subcellular location">
    <subcellularLocation>
        <location evidence="1">Cytoplasm</location>
    </subcellularLocation>
</comment>
<comment type="similarity">
    <text evidence="1">Belongs to the MurB family.</text>
</comment>
<reference key="1">
    <citation type="submission" date="2008-08" db="EMBL/GenBank/DDBJ databases">
        <title>Complete sequence of Anaeromyxobacter sp. K.</title>
        <authorList>
            <consortium name="US DOE Joint Genome Institute"/>
            <person name="Lucas S."/>
            <person name="Copeland A."/>
            <person name="Lapidus A."/>
            <person name="Glavina del Rio T."/>
            <person name="Dalin E."/>
            <person name="Tice H."/>
            <person name="Bruce D."/>
            <person name="Goodwin L."/>
            <person name="Pitluck S."/>
            <person name="Saunders E."/>
            <person name="Brettin T."/>
            <person name="Detter J.C."/>
            <person name="Han C."/>
            <person name="Larimer F."/>
            <person name="Land M."/>
            <person name="Hauser L."/>
            <person name="Kyrpides N."/>
            <person name="Ovchinnikiva G."/>
            <person name="Beliaev A."/>
        </authorList>
    </citation>
    <scope>NUCLEOTIDE SEQUENCE [LARGE SCALE GENOMIC DNA]</scope>
    <source>
        <strain>K</strain>
    </source>
</reference>
<evidence type="ECO:0000255" key="1">
    <source>
        <dbReference type="HAMAP-Rule" id="MF_00037"/>
    </source>
</evidence>
<evidence type="ECO:0000256" key="2">
    <source>
        <dbReference type="SAM" id="MobiDB-lite"/>
    </source>
</evidence>
<organism>
    <name type="scientific">Anaeromyxobacter sp. (strain K)</name>
    <dbReference type="NCBI Taxonomy" id="447217"/>
    <lineage>
        <taxon>Bacteria</taxon>
        <taxon>Pseudomonadati</taxon>
        <taxon>Myxococcota</taxon>
        <taxon>Myxococcia</taxon>
        <taxon>Myxococcales</taxon>
        <taxon>Cystobacterineae</taxon>
        <taxon>Anaeromyxobacteraceae</taxon>
        <taxon>Anaeromyxobacter</taxon>
    </lineage>
</organism>
<name>MURB_ANASK</name>
<gene>
    <name evidence="1" type="primary">murB</name>
    <name type="ordered locus">AnaeK_3829</name>
</gene>
<sequence length="329" mass="34174">MTWRDEIARRVRGEHLRDAPLAPRTAVRVGGPADLLCRPADGDALSALLRAVRELGVPLSVLGGGANTLVADAGVRGVVLRLPQEFPGESTDGGTLVLSAGAPISRLPARAHAHGLVGMEFLGGIPGTLGGAAAMNAGTRLGEMKDVVTRLELATPDGTGFVPASALGYAYRTCRLPPGAVIARVEVRLHAGDVAASEALMREDRERRRATQPLDRPTFGSTFTNPPGEYAGRLVEAVGLKGHRVGNAIWSPVHANFVTNLGGATARDVLALVRLARARVKERFGIALETEVRLMGEFLDEDLEGLDGHAAAGGGPGAASGGVRPPEAT</sequence>
<feature type="chain" id="PRO_1000191396" description="UDP-N-acetylenolpyruvoylglucosamine reductase">
    <location>
        <begin position="1"/>
        <end position="329"/>
    </location>
</feature>
<feature type="domain" description="FAD-binding PCMH-type" evidence="1">
    <location>
        <begin position="28"/>
        <end position="192"/>
    </location>
</feature>
<feature type="region of interest" description="Disordered" evidence="2">
    <location>
        <begin position="202"/>
        <end position="227"/>
    </location>
</feature>
<feature type="region of interest" description="Disordered" evidence="2">
    <location>
        <begin position="307"/>
        <end position="329"/>
    </location>
</feature>
<feature type="compositionally biased region" description="Gly residues" evidence="2">
    <location>
        <begin position="311"/>
        <end position="320"/>
    </location>
</feature>
<feature type="active site" evidence="1">
    <location>
        <position position="172"/>
    </location>
</feature>
<feature type="active site" description="Proton donor" evidence="1">
    <location>
        <position position="221"/>
    </location>
</feature>
<feature type="active site" evidence="1">
    <location>
        <position position="291"/>
    </location>
</feature>
<accession>B4UES3</accession>
<keyword id="KW-0131">Cell cycle</keyword>
<keyword id="KW-0132">Cell division</keyword>
<keyword id="KW-0133">Cell shape</keyword>
<keyword id="KW-0961">Cell wall biogenesis/degradation</keyword>
<keyword id="KW-0963">Cytoplasm</keyword>
<keyword id="KW-0274">FAD</keyword>
<keyword id="KW-0285">Flavoprotein</keyword>
<keyword id="KW-0521">NADP</keyword>
<keyword id="KW-0560">Oxidoreductase</keyword>
<keyword id="KW-0573">Peptidoglycan synthesis</keyword>
<protein>
    <recommendedName>
        <fullName evidence="1">UDP-N-acetylenolpyruvoylglucosamine reductase</fullName>
        <ecNumber evidence="1">1.3.1.98</ecNumber>
    </recommendedName>
    <alternativeName>
        <fullName evidence="1">UDP-N-acetylmuramate dehydrogenase</fullName>
    </alternativeName>
</protein>
<proteinExistence type="inferred from homology"/>
<dbReference type="EC" id="1.3.1.98" evidence="1"/>
<dbReference type="EMBL" id="CP001131">
    <property type="protein sequence ID" value="ACG75040.1"/>
    <property type="molecule type" value="Genomic_DNA"/>
</dbReference>
<dbReference type="RefSeq" id="WP_012527800.1">
    <property type="nucleotide sequence ID" value="NC_011145.1"/>
</dbReference>
<dbReference type="SMR" id="B4UES3"/>
<dbReference type="KEGG" id="ank:AnaeK_3829"/>
<dbReference type="HOGENOM" id="CLU_035304_1_1_7"/>
<dbReference type="OrthoDB" id="9804753at2"/>
<dbReference type="UniPathway" id="UPA00219"/>
<dbReference type="Proteomes" id="UP000001871">
    <property type="component" value="Chromosome"/>
</dbReference>
<dbReference type="GO" id="GO:0005829">
    <property type="term" value="C:cytosol"/>
    <property type="evidence" value="ECO:0007669"/>
    <property type="project" value="TreeGrafter"/>
</dbReference>
<dbReference type="GO" id="GO:0071949">
    <property type="term" value="F:FAD binding"/>
    <property type="evidence" value="ECO:0007669"/>
    <property type="project" value="InterPro"/>
</dbReference>
<dbReference type="GO" id="GO:0008762">
    <property type="term" value="F:UDP-N-acetylmuramate dehydrogenase activity"/>
    <property type="evidence" value="ECO:0007669"/>
    <property type="project" value="UniProtKB-UniRule"/>
</dbReference>
<dbReference type="GO" id="GO:0051301">
    <property type="term" value="P:cell division"/>
    <property type="evidence" value="ECO:0007669"/>
    <property type="project" value="UniProtKB-KW"/>
</dbReference>
<dbReference type="GO" id="GO:0071555">
    <property type="term" value="P:cell wall organization"/>
    <property type="evidence" value="ECO:0007669"/>
    <property type="project" value="UniProtKB-KW"/>
</dbReference>
<dbReference type="GO" id="GO:0009252">
    <property type="term" value="P:peptidoglycan biosynthetic process"/>
    <property type="evidence" value="ECO:0007669"/>
    <property type="project" value="UniProtKB-UniRule"/>
</dbReference>
<dbReference type="GO" id="GO:0008360">
    <property type="term" value="P:regulation of cell shape"/>
    <property type="evidence" value="ECO:0007669"/>
    <property type="project" value="UniProtKB-KW"/>
</dbReference>
<dbReference type="Gene3D" id="3.30.465.10">
    <property type="match status" value="1"/>
</dbReference>
<dbReference type="Gene3D" id="3.90.78.10">
    <property type="entry name" value="UDP-N-acetylenolpyruvoylglucosamine reductase, C-terminal domain"/>
    <property type="match status" value="1"/>
</dbReference>
<dbReference type="Gene3D" id="3.30.43.10">
    <property type="entry name" value="Uridine Diphospho-n-acetylenolpyruvylglucosamine Reductase, domain 2"/>
    <property type="match status" value="1"/>
</dbReference>
<dbReference type="HAMAP" id="MF_00037">
    <property type="entry name" value="MurB"/>
    <property type="match status" value="1"/>
</dbReference>
<dbReference type="InterPro" id="IPR016166">
    <property type="entry name" value="FAD-bd_PCMH"/>
</dbReference>
<dbReference type="InterPro" id="IPR036318">
    <property type="entry name" value="FAD-bd_PCMH-like_sf"/>
</dbReference>
<dbReference type="InterPro" id="IPR016167">
    <property type="entry name" value="FAD-bd_PCMH_sub1"/>
</dbReference>
<dbReference type="InterPro" id="IPR016169">
    <property type="entry name" value="FAD-bd_PCMH_sub2"/>
</dbReference>
<dbReference type="InterPro" id="IPR003170">
    <property type="entry name" value="MurB"/>
</dbReference>
<dbReference type="InterPro" id="IPR011601">
    <property type="entry name" value="MurB_C"/>
</dbReference>
<dbReference type="InterPro" id="IPR036635">
    <property type="entry name" value="MurB_C_sf"/>
</dbReference>
<dbReference type="InterPro" id="IPR006094">
    <property type="entry name" value="Oxid_FAD_bind_N"/>
</dbReference>
<dbReference type="NCBIfam" id="TIGR00179">
    <property type="entry name" value="murB"/>
    <property type="match status" value="1"/>
</dbReference>
<dbReference type="NCBIfam" id="NF010480">
    <property type="entry name" value="PRK13905.1"/>
    <property type="match status" value="1"/>
</dbReference>
<dbReference type="PANTHER" id="PTHR21071">
    <property type="entry name" value="UDP-N-ACETYLENOLPYRUVOYLGLUCOSAMINE REDUCTASE"/>
    <property type="match status" value="1"/>
</dbReference>
<dbReference type="PANTHER" id="PTHR21071:SF4">
    <property type="entry name" value="UDP-N-ACETYLENOLPYRUVOYLGLUCOSAMINE REDUCTASE"/>
    <property type="match status" value="1"/>
</dbReference>
<dbReference type="Pfam" id="PF01565">
    <property type="entry name" value="FAD_binding_4"/>
    <property type="match status" value="1"/>
</dbReference>
<dbReference type="Pfam" id="PF02873">
    <property type="entry name" value="MurB_C"/>
    <property type="match status" value="1"/>
</dbReference>
<dbReference type="SUPFAM" id="SSF56176">
    <property type="entry name" value="FAD-binding/transporter-associated domain-like"/>
    <property type="match status" value="1"/>
</dbReference>
<dbReference type="SUPFAM" id="SSF56194">
    <property type="entry name" value="Uridine diphospho-N-Acetylenolpyruvylglucosamine reductase, MurB, C-terminal domain"/>
    <property type="match status" value="1"/>
</dbReference>
<dbReference type="PROSITE" id="PS51387">
    <property type="entry name" value="FAD_PCMH"/>
    <property type="match status" value="1"/>
</dbReference>